<proteinExistence type="inferred from homology"/>
<sequence>MGQETEINKRYQVAKERYQAIGVDTEKALKTLKDIKISMHCWQGDDVKGFLNPDGELTGGIMATGNYPGAAHTPKQLRQDLEKAYSLIPGKHKLNLHAIYVDTDEKVDLNEIEPKHFTPWVEWAKEQGLGLDFNPTFFSHPMFKDNYTLASPDKEVRDFWIEHGKRSRKISEYFGKELGQTSINNFWVPDGIKDCPIDRYTPRKRLMEALDEVFAEKLDEKYTQEAVESKLFGLGAEAYTVGSHEFYMGYGITRDKLICLDAGHFHPTEVISNKLSSLALFSKGVMLHVSRPVRWDSDHVVIMDDELIEIGRELVRNDLLGITNIGLDFFDATINRIAAWVVGTRNTQKSLLKALLEPTADLKKMELENDFTSRMAITEELKDFPFGDVWNYFCEINGVPVGLDWLKEVKAYEEDVLLKR</sequence>
<gene>
    <name evidence="1" type="primary">rhaA</name>
    <name type="ordered locus">lmo2848</name>
</gene>
<organism>
    <name type="scientific">Listeria monocytogenes serovar 1/2a (strain ATCC BAA-679 / EGD-e)</name>
    <dbReference type="NCBI Taxonomy" id="169963"/>
    <lineage>
        <taxon>Bacteria</taxon>
        <taxon>Bacillati</taxon>
        <taxon>Bacillota</taxon>
        <taxon>Bacilli</taxon>
        <taxon>Bacillales</taxon>
        <taxon>Listeriaceae</taxon>
        <taxon>Listeria</taxon>
    </lineage>
</organism>
<feature type="chain" id="PRO_0000090560" description="L-rhamnose isomerase">
    <location>
        <begin position="1"/>
        <end position="420"/>
    </location>
</feature>
<feature type="binding site" evidence="1">
    <location>
        <position position="264"/>
    </location>
    <ligand>
        <name>Mn(2+)</name>
        <dbReference type="ChEBI" id="CHEBI:29035"/>
    </ligand>
</feature>
<feature type="binding site" evidence="1">
    <location>
        <position position="296"/>
    </location>
    <ligand>
        <name>Mn(2+)</name>
        <dbReference type="ChEBI" id="CHEBI:29035"/>
    </ligand>
</feature>
<feature type="binding site" evidence="1">
    <location>
        <position position="298"/>
    </location>
    <ligand>
        <name>Mn(2+)</name>
        <dbReference type="ChEBI" id="CHEBI:29035"/>
    </ligand>
</feature>
<evidence type="ECO:0000255" key="1">
    <source>
        <dbReference type="HAMAP-Rule" id="MF_00541"/>
    </source>
</evidence>
<reference key="1">
    <citation type="journal article" date="2001" name="Science">
        <title>Comparative genomics of Listeria species.</title>
        <authorList>
            <person name="Glaser P."/>
            <person name="Frangeul L."/>
            <person name="Buchrieser C."/>
            <person name="Rusniok C."/>
            <person name="Amend A."/>
            <person name="Baquero F."/>
            <person name="Berche P."/>
            <person name="Bloecker H."/>
            <person name="Brandt P."/>
            <person name="Chakraborty T."/>
            <person name="Charbit A."/>
            <person name="Chetouani F."/>
            <person name="Couve E."/>
            <person name="de Daruvar A."/>
            <person name="Dehoux P."/>
            <person name="Domann E."/>
            <person name="Dominguez-Bernal G."/>
            <person name="Duchaud E."/>
            <person name="Durant L."/>
            <person name="Dussurget O."/>
            <person name="Entian K.-D."/>
            <person name="Fsihi H."/>
            <person name="Garcia-del Portillo F."/>
            <person name="Garrido P."/>
            <person name="Gautier L."/>
            <person name="Goebel W."/>
            <person name="Gomez-Lopez N."/>
            <person name="Hain T."/>
            <person name="Hauf J."/>
            <person name="Jackson D."/>
            <person name="Jones L.-M."/>
            <person name="Kaerst U."/>
            <person name="Kreft J."/>
            <person name="Kuhn M."/>
            <person name="Kunst F."/>
            <person name="Kurapkat G."/>
            <person name="Madueno E."/>
            <person name="Maitournam A."/>
            <person name="Mata Vicente J."/>
            <person name="Ng E."/>
            <person name="Nedjari H."/>
            <person name="Nordsiek G."/>
            <person name="Novella S."/>
            <person name="de Pablos B."/>
            <person name="Perez-Diaz J.-C."/>
            <person name="Purcell R."/>
            <person name="Remmel B."/>
            <person name="Rose M."/>
            <person name="Schlueter T."/>
            <person name="Simoes N."/>
            <person name="Tierrez A."/>
            <person name="Vazquez-Boland J.-A."/>
            <person name="Voss H."/>
            <person name="Wehland J."/>
            <person name="Cossart P."/>
        </authorList>
    </citation>
    <scope>NUCLEOTIDE SEQUENCE [LARGE SCALE GENOMIC DNA]</scope>
    <source>
        <strain>ATCC BAA-679 / EGD-e</strain>
    </source>
</reference>
<keyword id="KW-0963">Cytoplasm</keyword>
<keyword id="KW-0413">Isomerase</keyword>
<keyword id="KW-0464">Manganese</keyword>
<keyword id="KW-0479">Metal-binding</keyword>
<keyword id="KW-1185">Reference proteome</keyword>
<keyword id="KW-0684">Rhamnose metabolism</keyword>
<name>RHAA_LISMO</name>
<comment type="function">
    <text evidence="1">Catalyzes the interconversion of L-rhamnose and L-rhamnulose.</text>
</comment>
<comment type="catalytic activity">
    <reaction evidence="1">
        <text>L-rhamnopyranose = L-rhamnulose</text>
        <dbReference type="Rhea" id="RHEA:23160"/>
        <dbReference type="ChEBI" id="CHEBI:17897"/>
        <dbReference type="ChEBI" id="CHEBI:62346"/>
        <dbReference type="EC" id="5.3.1.14"/>
    </reaction>
</comment>
<comment type="cofactor">
    <cofactor evidence="1">
        <name>Mn(2+)</name>
        <dbReference type="ChEBI" id="CHEBI:29035"/>
    </cofactor>
    <text evidence="1">Binds 1 Mn(2+) ion per subunit.</text>
</comment>
<comment type="pathway">
    <text evidence="1">Carbohydrate degradation; L-rhamnose degradation; glycerone phosphate from L-rhamnose: step 1/3.</text>
</comment>
<comment type="subcellular location">
    <subcellularLocation>
        <location evidence="1">Cytoplasm</location>
    </subcellularLocation>
</comment>
<comment type="similarity">
    <text evidence="1">Belongs to the rhamnose isomerase family.</text>
</comment>
<dbReference type="EC" id="5.3.1.14" evidence="1"/>
<dbReference type="EMBL" id="AL591984">
    <property type="protein sequence ID" value="CAD01061.1"/>
    <property type="molecule type" value="Genomic_DNA"/>
</dbReference>
<dbReference type="PIR" id="AG1430">
    <property type="entry name" value="AG1430"/>
</dbReference>
<dbReference type="RefSeq" id="NP_466370.1">
    <property type="nucleotide sequence ID" value="NC_003210.1"/>
</dbReference>
<dbReference type="RefSeq" id="WP_003730700.1">
    <property type="nucleotide sequence ID" value="NZ_CP149495.1"/>
</dbReference>
<dbReference type="SMR" id="Q8Y3I7"/>
<dbReference type="STRING" id="169963.gene:17595566"/>
<dbReference type="PaxDb" id="169963-lmo2848"/>
<dbReference type="EnsemblBacteria" id="CAD01061">
    <property type="protein sequence ID" value="CAD01061"/>
    <property type="gene ID" value="CAD01061"/>
</dbReference>
<dbReference type="GeneID" id="986386"/>
<dbReference type="KEGG" id="lmo:lmo2848"/>
<dbReference type="PATRIC" id="fig|169963.11.peg.2919"/>
<dbReference type="eggNOG" id="COG4806">
    <property type="taxonomic scope" value="Bacteria"/>
</dbReference>
<dbReference type="HOGENOM" id="CLU_052790_0_0_9"/>
<dbReference type="OrthoDB" id="9766697at2"/>
<dbReference type="PhylomeDB" id="Q8Y3I7"/>
<dbReference type="BioCyc" id="LMON169963:LMO2848-MONOMER"/>
<dbReference type="UniPathway" id="UPA00541">
    <property type="reaction ID" value="UER00601"/>
</dbReference>
<dbReference type="Proteomes" id="UP000000817">
    <property type="component" value="Chromosome"/>
</dbReference>
<dbReference type="GO" id="GO:0005737">
    <property type="term" value="C:cytoplasm"/>
    <property type="evidence" value="ECO:0007669"/>
    <property type="project" value="UniProtKB-SubCell"/>
</dbReference>
<dbReference type="GO" id="GO:0008740">
    <property type="term" value="F:L-rhamnose isomerase activity"/>
    <property type="evidence" value="ECO:0000318"/>
    <property type="project" value="GO_Central"/>
</dbReference>
<dbReference type="GO" id="GO:0030145">
    <property type="term" value="F:manganese ion binding"/>
    <property type="evidence" value="ECO:0007669"/>
    <property type="project" value="UniProtKB-UniRule"/>
</dbReference>
<dbReference type="GO" id="GO:0019324">
    <property type="term" value="P:L-lyxose metabolic process"/>
    <property type="evidence" value="ECO:0000318"/>
    <property type="project" value="GO_Central"/>
</dbReference>
<dbReference type="GO" id="GO:0019301">
    <property type="term" value="P:rhamnose catabolic process"/>
    <property type="evidence" value="ECO:0000318"/>
    <property type="project" value="GO_Central"/>
</dbReference>
<dbReference type="FunFam" id="3.20.20.150:FF:000006">
    <property type="entry name" value="L-rhamnose isomerase"/>
    <property type="match status" value="1"/>
</dbReference>
<dbReference type="Gene3D" id="3.20.20.150">
    <property type="entry name" value="Divalent-metal-dependent TIM barrel enzymes"/>
    <property type="match status" value="1"/>
</dbReference>
<dbReference type="HAMAP" id="MF_00541">
    <property type="entry name" value="RhaA"/>
    <property type="match status" value="1"/>
</dbReference>
<dbReference type="InterPro" id="IPR050337">
    <property type="entry name" value="L-rhamnose_isomerase"/>
</dbReference>
<dbReference type="InterPro" id="IPR009308">
    <property type="entry name" value="Rhamnose_isomerase"/>
</dbReference>
<dbReference type="InterPro" id="IPR036237">
    <property type="entry name" value="Xyl_isomerase-like_sf"/>
</dbReference>
<dbReference type="NCBIfam" id="NF002203">
    <property type="entry name" value="PRK01076.1"/>
    <property type="match status" value="1"/>
</dbReference>
<dbReference type="NCBIfam" id="TIGR01748">
    <property type="entry name" value="rhaA"/>
    <property type="match status" value="1"/>
</dbReference>
<dbReference type="PANTHER" id="PTHR30268">
    <property type="entry name" value="L-RHAMNOSE ISOMERASE"/>
    <property type="match status" value="1"/>
</dbReference>
<dbReference type="PANTHER" id="PTHR30268:SF0">
    <property type="entry name" value="L-RHAMNOSE ISOMERASE"/>
    <property type="match status" value="1"/>
</dbReference>
<dbReference type="Pfam" id="PF06134">
    <property type="entry name" value="RhaA"/>
    <property type="match status" value="1"/>
</dbReference>
<dbReference type="SUPFAM" id="SSF51658">
    <property type="entry name" value="Xylose isomerase-like"/>
    <property type="match status" value="1"/>
</dbReference>
<accession>Q8Y3I7</accession>
<protein>
    <recommendedName>
        <fullName evidence="1">L-rhamnose isomerase</fullName>
        <ecNumber evidence="1">5.3.1.14</ecNumber>
    </recommendedName>
</protein>